<accession>B7GQ05</accession>
<accession>E8MQW4</accession>
<keyword id="KW-0227">DNA damage</keyword>
<keyword id="KW-0233">DNA recombination</keyword>
<keyword id="KW-0234">DNA repair</keyword>
<feature type="chain" id="PRO_1000193363" description="DNA repair protein RecO">
    <location>
        <begin position="1"/>
        <end position="239"/>
    </location>
</feature>
<gene>
    <name evidence="1" type="primary">recO</name>
    <name type="ordered locus">Blon_0782</name>
    <name type="ordered locus">BLIJ_0797</name>
</gene>
<comment type="function">
    <text evidence="1">Involved in DNA repair and RecF pathway recombination.</text>
</comment>
<comment type="similarity">
    <text evidence="1">Belongs to the RecO family.</text>
</comment>
<reference key="1">
    <citation type="journal article" date="2008" name="Proc. Natl. Acad. Sci. U.S.A.">
        <title>The genome sequence of Bifidobacterium longum subsp. infantis reveals adaptations for milk utilization within the infant microbiome.</title>
        <authorList>
            <person name="Sela D.A."/>
            <person name="Chapman J."/>
            <person name="Adeuya A."/>
            <person name="Kim J.H."/>
            <person name="Chen F."/>
            <person name="Whitehead T.R."/>
            <person name="Lapidus A."/>
            <person name="Rokhsar D.S."/>
            <person name="Lebrilla C.B."/>
            <person name="German J.B."/>
            <person name="Price N.P."/>
            <person name="Richardson P.M."/>
            <person name="Mills D.A."/>
        </authorList>
    </citation>
    <scope>NUCLEOTIDE SEQUENCE [LARGE SCALE GENOMIC DNA]</scope>
    <source>
        <strain>ATCC 15697 / DSM 20088 / JCM 1222 / NCTC 11817 / S12</strain>
    </source>
</reference>
<reference key="2">
    <citation type="journal article" date="2011" name="Nature">
        <title>Bifidobacteria can protect from enteropathogenic infection through production of acetate.</title>
        <authorList>
            <person name="Fukuda S."/>
            <person name="Toh H."/>
            <person name="Hase K."/>
            <person name="Oshima K."/>
            <person name="Nakanishi Y."/>
            <person name="Yoshimura K."/>
            <person name="Tobe T."/>
            <person name="Clarke J.M."/>
            <person name="Topping D.L."/>
            <person name="Suzuki T."/>
            <person name="Taylor T.D."/>
            <person name="Itoh K."/>
            <person name="Kikuchi J."/>
            <person name="Morita H."/>
            <person name="Hattori M."/>
            <person name="Ohno H."/>
        </authorList>
    </citation>
    <scope>NUCLEOTIDE SEQUENCE [LARGE SCALE GENOMIC DNA]</scope>
    <source>
        <strain>ATCC 15697 / DSM 20088 / JCM 1222 / NCTC 11817 / S12</strain>
    </source>
</reference>
<protein>
    <recommendedName>
        <fullName evidence="1">DNA repair protein RecO</fullName>
    </recommendedName>
    <alternativeName>
        <fullName evidence="1">Recombination protein O</fullName>
    </alternativeName>
</protein>
<dbReference type="EMBL" id="CP001095">
    <property type="protein sequence ID" value="ACJ51885.1"/>
    <property type="molecule type" value="Genomic_DNA"/>
</dbReference>
<dbReference type="EMBL" id="AP010889">
    <property type="protein sequence ID" value="BAJ68389.1"/>
    <property type="molecule type" value="Genomic_DNA"/>
</dbReference>
<dbReference type="RefSeq" id="WP_012577166.1">
    <property type="nucleotide sequence ID" value="NZ_JDTT01000007.1"/>
</dbReference>
<dbReference type="SMR" id="B7GQ05"/>
<dbReference type="KEGG" id="bln:Blon_0782"/>
<dbReference type="KEGG" id="blon:BLIJ_0797"/>
<dbReference type="PATRIC" id="fig|391904.8.peg.803"/>
<dbReference type="HOGENOM" id="CLU_066632_1_1_11"/>
<dbReference type="Proteomes" id="UP000001360">
    <property type="component" value="Chromosome"/>
</dbReference>
<dbReference type="GO" id="GO:0043590">
    <property type="term" value="C:bacterial nucleoid"/>
    <property type="evidence" value="ECO:0007669"/>
    <property type="project" value="TreeGrafter"/>
</dbReference>
<dbReference type="GO" id="GO:0006310">
    <property type="term" value="P:DNA recombination"/>
    <property type="evidence" value="ECO:0007669"/>
    <property type="project" value="UniProtKB-UniRule"/>
</dbReference>
<dbReference type="GO" id="GO:0006302">
    <property type="term" value="P:double-strand break repair"/>
    <property type="evidence" value="ECO:0007669"/>
    <property type="project" value="TreeGrafter"/>
</dbReference>
<dbReference type="Gene3D" id="2.40.50.140">
    <property type="entry name" value="Nucleic acid-binding proteins"/>
    <property type="match status" value="1"/>
</dbReference>
<dbReference type="Gene3D" id="1.20.1440.120">
    <property type="entry name" value="Recombination protein O, C-terminal domain"/>
    <property type="match status" value="1"/>
</dbReference>
<dbReference type="HAMAP" id="MF_00201">
    <property type="entry name" value="RecO"/>
    <property type="match status" value="1"/>
</dbReference>
<dbReference type="InterPro" id="IPR037278">
    <property type="entry name" value="ARFGAP/RecO"/>
</dbReference>
<dbReference type="InterPro" id="IPR022572">
    <property type="entry name" value="DNA_rep/recomb_RecO_N"/>
</dbReference>
<dbReference type="InterPro" id="IPR012340">
    <property type="entry name" value="NA-bd_OB-fold"/>
</dbReference>
<dbReference type="InterPro" id="IPR003717">
    <property type="entry name" value="RecO"/>
</dbReference>
<dbReference type="InterPro" id="IPR042242">
    <property type="entry name" value="RecO_C"/>
</dbReference>
<dbReference type="NCBIfam" id="TIGR00613">
    <property type="entry name" value="reco"/>
    <property type="match status" value="1"/>
</dbReference>
<dbReference type="PANTHER" id="PTHR33991">
    <property type="entry name" value="DNA REPAIR PROTEIN RECO"/>
    <property type="match status" value="1"/>
</dbReference>
<dbReference type="PANTHER" id="PTHR33991:SF1">
    <property type="entry name" value="DNA REPAIR PROTEIN RECO"/>
    <property type="match status" value="1"/>
</dbReference>
<dbReference type="Pfam" id="PF02565">
    <property type="entry name" value="RecO_C"/>
    <property type="match status" value="1"/>
</dbReference>
<dbReference type="Pfam" id="PF11967">
    <property type="entry name" value="RecO_N"/>
    <property type="match status" value="1"/>
</dbReference>
<dbReference type="SUPFAM" id="SSF57863">
    <property type="entry name" value="ArfGap/RecO-like zinc finger"/>
    <property type="match status" value="1"/>
</dbReference>
<dbReference type="SUPFAM" id="SSF50249">
    <property type="entry name" value="Nucleic acid-binding proteins"/>
    <property type="match status" value="1"/>
</dbReference>
<proteinExistence type="inferred from homology"/>
<sequence length="239" mass="26032">MSLYRDEGVVLRTSKLAEADRIITVLTRDHGKIRAVAKGVRRTKSRFGARLEPFMRVDLLIAEGRSLDTVSQAESIAAYGAAIVGDYAAYEAANVIVETIDKLVGTERERMTDQYRLLIGALNALAKRAHAPQAIGCSYVMRALALAGWTPRLGTCVVCGAAAPAYLSIASGGVMCEADHTTDARRIAPSALGQFDALVHGDWTVLDAAPVERVVRELVEDWGEYYLERPIRSLRLIDS</sequence>
<evidence type="ECO:0000255" key="1">
    <source>
        <dbReference type="HAMAP-Rule" id="MF_00201"/>
    </source>
</evidence>
<organism>
    <name type="scientific">Bifidobacterium longum subsp. infantis (strain ATCC 15697 / DSM 20088 / JCM 1222 / NCTC 11817 / S12)</name>
    <dbReference type="NCBI Taxonomy" id="391904"/>
    <lineage>
        <taxon>Bacteria</taxon>
        <taxon>Bacillati</taxon>
        <taxon>Actinomycetota</taxon>
        <taxon>Actinomycetes</taxon>
        <taxon>Bifidobacteriales</taxon>
        <taxon>Bifidobacteriaceae</taxon>
        <taxon>Bifidobacterium</taxon>
    </lineage>
</organism>
<name>RECO_BIFLS</name>